<keyword id="KW-0009">Actin-binding</keyword>
<keyword id="KW-0963">Cytoplasm</keyword>
<keyword id="KW-0968">Cytoplasmic vesicle</keyword>
<keyword id="KW-0479">Metal-binding</keyword>
<keyword id="KW-0597">Phosphoprotein</keyword>
<keyword id="KW-1185">Reference proteome</keyword>
<keyword id="KW-0677">Repeat</keyword>
<keyword id="KW-0862">Zinc</keyword>
<keyword id="KW-0863">Zinc-finger</keyword>
<protein>
    <recommendedName>
        <fullName>Rab effector MyRIP</fullName>
    </recommendedName>
    <alternativeName>
        <fullName>Exophilin-8</fullName>
    </alternativeName>
    <alternativeName>
        <fullName>Myosin-VIIa- and Rab-interacting protein</fullName>
    </alternativeName>
    <alternativeName>
        <fullName>Synaptotagmin-like protein lacking C2 domains C</fullName>
        <shortName>SlaC2-c</shortName>
        <shortName>Slp homolog lacking C2 domains c</shortName>
    </alternativeName>
</protein>
<dbReference type="EMBL" id="AY331984">
    <property type="protein sequence ID" value="AAP94626.1"/>
    <property type="molecule type" value="mRNA"/>
</dbReference>
<dbReference type="RefSeq" id="NP_878264.1">
    <property type="nucleotide sequence ID" value="NM_182844.1"/>
</dbReference>
<dbReference type="SMR" id="Q7TNY7"/>
<dbReference type="FunCoup" id="Q7TNY7">
    <property type="interactions" value="1663"/>
</dbReference>
<dbReference type="STRING" id="10116.ENSRNOP00000025460"/>
<dbReference type="iPTMnet" id="Q7TNY7"/>
<dbReference type="PhosphoSitePlus" id="Q7TNY7"/>
<dbReference type="PaxDb" id="10116-ENSRNOP00000025460"/>
<dbReference type="GeneID" id="360034"/>
<dbReference type="KEGG" id="rno:360034"/>
<dbReference type="UCSC" id="RGD:727731">
    <property type="organism name" value="rat"/>
</dbReference>
<dbReference type="AGR" id="RGD:727731"/>
<dbReference type="CTD" id="25924"/>
<dbReference type="RGD" id="727731">
    <property type="gene designation" value="Myrip"/>
</dbReference>
<dbReference type="eggNOG" id="ENOG502QPUS">
    <property type="taxonomic scope" value="Eukaryota"/>
</dbReference>
<dbReference type="InParanoid" id="Q7TNY7"/>
<dbReference type="PhylomeDB" id="Q7TNY7"/>
<dbReference type="Reactome" id="R-RNO-9824585">
    <property type="pathway name" value="Regulation of MITF-M-dependent genes involved in pigmentation"/>
</dbReference>
<dbReference type="PRO" id="PR:Q7TNY7"/>
<dbReference type="Proteomes" id="UP000002494">
    <property type="component" value="Unplaced"/>
</dbReference>
<dbReference type="GO" id="GO:0015629">
    <property type="term" value="C:actin cytoskeleton"/>
    <property type="evidence" value="ECO:0000266"/>
    <property type="project" value="RGD"/>
</dbReference>
<dbReference type="GO" id="GO:0016324">
    <property type="term" value="C:apical plasma membrane"/>
    <property type="evidence" value="ECO:0000314"/>
    <property type="project" value="RGD"/>
</dbReference>
<dbReference type="GO" id="GO:0030864">
    <property type="term" value="C:cortical actin cytoskeleton"/>
    <property type="evidence" value="ECO:0000318"/>
    <property type="project" value="GO_Central"/>
</dbReference>
<dbReference type="GO" id="GO:0031045">
    <property type="term" value="C:dense core granule"/>
    <property type="evidence" value="ECO:0000314"/>
    <property type="project" value="UniProtKB"/>
</dbReference>
<dbReference type="GO" id="GO:0000145">
    <property type="term" value="C:exocyst"/>
    <property type="evidence" value="ECO:0000266"/>
    <property type="project" value="RGD"/>
</dbReference>
<dbReference type="GO" id="GO:0042470">
    <property type="term" value="C:melanosome"/>
    <property type="evidence" value="ECO:0000266"/>
    <property type="project" value="RGD"/>
</dbReference>
<dbReference type="GO" id="GO:0048471">
    <property type="term" value="C:perinuclear region of cytoplasm"/>
    <property type="evidence" value="ECO:0000314"/>
    <property type="project" value="UniProtKB"/>
</dbReference>
<dbReference type="GO" id="GO:0001750">
    <property type="term" value="C:photoreceptor outer segment"/>
    <property type="evidence" value="ECO:0000266"/>
    <property type="project" value="RGD"/>
</dbReference>
<dbReference type="GO" id="GO:0045202">
    <property type="term" value="C:synapse"/>
    <property type="evidence" value="ECO:0000266"/>
    <property type="project" value="RGD"/>
</dbReference>
<dbReference type="GO" id="GO:0030133">
    <property type="term" value="C:transport vesicle"/>
    <property type="evidence" value="ECO:0007669"/>
    <property type="project" value="UniProtKB-SubCell"/>
</dbReference>
<dbReference type="GO" id="GO:0003779">
    <property type="term" value="F:actin binding"/>
    <property type="evidence" value="ECO:0000266"/>
    <property type="project" value="RGD"/>
</dbReference>
<dbReference type="GO" id="GO:0017022">
    <property type="term" value="F:myosin binding"/>
    <property type="evidence" value="ECO:0000266"/>
    <property type="project" value="RGD"/>
</dbReference>
<dbReference type="GO" id="GO:0051018">
    <property type="term" value="F:protein kinase A binding"/>
    <property type="evidence" value="ECO:0000314"/>
    <property type="project" value="UniProtKB"/>
</dbReference>
<dbReference type="GO" id="GO:0031267">
    <property type="term" value="F:small GTPase binding"/>
    <property type="evidence" value="ECO:0000266"/>
    <property type="project" value="RGD"/>
</dbReference>
<dbReference type="GO" id="GO:0008270">
    <property type="term" value="F:zinc ion binding"/>
    <property type="evidence" value="ECO:0007669"/>
    <property type="project" value="UniProtKB-KW"/>
</dbReference>
<dbReference type="GO" id="GO:0006886">
    <property type="term" value="P:intracellular protein transport"/>
    <property type="evidence" value="ECO:0007669"/>
    <property type="project" value="InterPro"/>
</dbReference>
<dbReference type="GO" id="GO:0032024">
    <property type="term" value="P:positive regulation of insulin secretion"/>
    <property type="evidence" value="ECO:0000315"/>
    <property type="project" value="UniProtKB"/>
</dbReference>
<dbReference type="FunFam" id="3.30.40.10:FF:000018">
    <property type="entry name" value="Synaptotagmin-like 5, isoform CRA_a"/>
    <property type="match status" value="1"/>
</dbReference>
<dbReference type="Gene3D" id="3.30.40.10">
    <property type="entry name" value="Zinc/RING finger domain, C3HC4 (zinc finger)"/>
    <property type="match status" value="1"/>
</dbReference>
<dbReference type="InterPro" id="IPR041282">
    <property type="entry name" value="FYVE_2"/>
</dbReference>
<dbReference type="InterPro" id="IPR051745">
    <property type="entry name" value="Intracell_Transport_Effector"/>
</dbReference>
<dbReference type="InterPro" id="IPR006788">
    <property type="entry name" value="Myrip/Melanophilin"/>
</dbReference>
<dbReference type="InterPro" id="IPR010911">
    <property type="entry name" value="Rab_BD"/>
</dbReference>
<dbReference type="InterPro" id="IPR011011">
    <property type="entry name" value="Znf_FYVE_PHD"/>
</dbReference>
<dbReference type="InterPro" id="IPR013083">
    <property type="entry name" value="Znf_RING/FYVE/PHD"/>
</dbReference>
<dbReference type="PANTHER" id="PTHR14555">
    <property type="entry name" value="MYELIN-ASSOCIATED OLIGODENDROCYTIC BASIC PROTEIN MOBP -RELATED"/>
    <property type="match status" value="1"/>
</dbReference>
<dbReference type="PANTHER" id="PTHR14555:SF6">
    <property type="entry name" value="RAB EFFECTOR MYRIP"/>
    <property type="match status" value="1"/>
</dbReference>
<dbReference type="Pfam" id="PF02318">
    <property type="entry name" value="FYVE_2"/>
    <property type="match status" value="1"/>
</dbReference>
<dbReference type="Pfam" id="PF04698">
    <property type="entry name" value="Rab_eff_C"/>
    <property type="match status" value="1"/>
</dbReference>
<dbReference type="SUPFAM" id="SSF57903">
    <property type="entry name" value="FYVE/PHD zinc finger"/>
    <property type="match status" value="1"/>
</dbReference>
<dbReference type="PROSITE" id="PS50916">
    <property type="entry name" value="RABBD"/>
    <property type="match status" value="1"/>
</dbReference>
<organism>
    <name type="scientific">Rattus norvegicus</name>
    <name type="common">Rat</name>
    <dbReference type="NCBI Taxonomy" id="10116"/>
    <lineage>
        <taxon>Eukaryota</taxon>
        <taxon>Metazoa</taxon>
        <taxon>Chordata</taxon>
        <taxon>Craniata</taxon>
        <taxon>Vertebrata</taxon>
        <taxon>Euteleostomi</taxon>
        <taxon>Mammalia</taxon>
        <taxon>Eutheria</taxon>
        <taxon>Euarchontoglires</taxon>
        <taxon>Glires</taxon>
        <taxon>Rodentia</taxon>
        <taxon>Myomorpha</taxon>
        <taxon>Muroidea</taxon>
        <taxon>Muridae</taxon>
        <taxon>Murinae</taxon>
        <taxon>Rattus</taxon>
    </lineage>
</organism>
<accession>Q7TNY7</accession>
<comment type="function">
    <text evidence="1 5">Rab effector protein involved in melanosome transport. Serves as link between melanosome-bound RAB27A and the motor proteins MYO5A and MYO7A. May link RAB27A-containing vesicles to actin filaments (By similarity). Functions as a protein kinase A-anchoring protein (AKAP). May act as a scaffolding protein that links PKA to components of the exocytosis machinery, thus facilitating exocytosis, including insulin release.</text>
</comment>
<comment type="subunit">
    <text evidence="1 5">Binds MYO5A, MYO7A and F-actin. Binds RAB27A that has been activated by GTP-binding via its N-terminus (By similarity). Interacts with PRKAR2A. Interacts with components of the exocyst complex, including EXOC3 and EXOC4.</text>
</comment>
<comment type="subcellular location">
    <subcellularLocation>
        <location evidence="2">Cytoplasm</location>
    </subcellularLocation>
    <subcellularLocation>
        <location evidence="5">Cytoplasm</location>
        <location evidence="5">Perinuclear region</location>
    </subcellularLocation>
    <subcellularLocation>
        <location evidence="5">Cytoplasmic vesicle</location>
        <location evidence="5">Secretory vesicle</location>
    </subcellularLocation>
    <subcellularLocation>
        <location evidence="2">Melanosome</location>
    </subcellularLocation>
    <text evidence="2">In presynaptic and postsynaptic areas in photoreceptor cells and in the basal microvilli of retinal pigment epithelium cells. Associated with melanosomes. Colocalizes with actin filaments.</text>
</comment>
<proteinExistence type="evidence at protein level"/>
<sequence>MGRKLDLSGLTDDETEHVLQVVQRDFNLRKKEEDRLSEMKQRLAEENSKCSILSKHQKFVERCCMRCCSPFTFLVNARRRCGECKFSVCKSCCSYQKHEKLWVCCVCQQARLLRTQSLEWFYNNVKTRFKRFGSAKVLKNLYKKHRLESGACFDILGGGLYEPNLENEGSISGSDSTFYRQSEGHSMMDTLAVALQVAEEAIEEAISKAESQRDSLDKQNEASYLRDHRQELAEELAGTILQRIIRKQKDKADLHAEEEEPECTRPQSSGVKARGEGTAAPPGRHKARAALWRSQSAFSFTTEDTLKTSSAEAAPRQPKDRAQRLLEESALPSWRSMDGLDGKNLVPLLQSPDGNWMTLKDSSRQPPTRLLAKPKSRTFQALEVASSVASAYDELGSDSEEDFDYSEALSKLRPPSQGRLKQPQPQPAQAQSSGQGPLATSPSNPEAMCSDSETSSTSSSREAGCRAKLLWLQRKAPKNPSAEKTHLQGELDVNFNPQAAGGETSDSSDPEETLHTADRRARRWRRARVGPEESNRGLPSPSAYPPALHTAQVSDNVSETDISNEAQNSRSSTDSAEEKLRNRLYELAMKMSEKETSSGEDQESESKTEPKNQKGSLSSEENNQGVQEELKKKCSAVSLCNISTEVLKVINATEELIAESAGPWEIPPVSTDRDNGMFPLGTDQRSLDKQLTSLEENVYLAAGTVYGLEGQLSELEDAARCIHSSTGETELADLEDQVAAAAAQVHHAELQISDIESRISALTIAGLNIAPCVRLTRRRDQKQRSQVQTIDTSRQQRRKLPAPPVKAEKIEASSVTPIKTFNRNFLLQGSSTNRPTASTSNTKDLMEPVLESAVMY</sequence>
<name>MYRIP_RAT</name>
<reference key="1">
    <citation type="submission" date="2003-06" db="EMBL/GenBank/DDBJ databases">
        <title>Myrip (Slac2-c) interacting with Myo7a/Rab27a plays a role in melanosome transport in retinal pigmented epithelium.</title>
        <authorList>
            <person name="Ramalho J.S."/>
            <person name="Futter C."/>
            <person name="Seabra M."/>
        </authorList>
    </citation>
    <scope>NUCLEOTIDE SEQUENCE [MRNA]</scope>
    <source>
        <strain>Wistar</strain>
        <tissue>Retina</tissue>
    </source>
</reference>
<reference key="2">
    <citation type="journal article" date="2007" name="J. Biol. Chem.">
        <title>MyRIP anchors protein kinase A to the exocyst complex.</title>
        <authorList>
            <person name="Goehring A.S."/>
            <person name="Pedroja B.S."/>
            <person name="Hinke S.A."/>
            <person name="Langeberg L.K."/>
            <person name="Scott J.D."/>
        </authorList>
    </citation>
    <scope>FUNCTION</scope>
    <scope>INTERACTION WITH EXOC3 AND EXOC4</scope>
    <scope>SUBCELLULAR LOCATION</scope>
</reference>
<reference key="3">
    <citation type="journal article" date="2012" name="Nat. Commun.">
        <title>Quantitative maps of protein phosphorylation sites across 14 different rat organs and tissues.</title>
        <authorList>
            <person name="Lundby A."/>
            <person name="Secher A."/>
            <person name="Lage K."/>
            <person name="Nordsborg N.B."/>
            <person name="Dmytriyev A."/>
            <person name="Lundby C."/>
            <person name="Olsen J.V."/>
        </authorList>
    </citation>
    <scope>PHOSPHORYLATION [LARGE SCALE ANALYSIS] AT SER-351</scope>
    <scope>IDENTIFICATION BY MASS SPECTROMETRY [LARGE SCALE ANALYSIS]</scope>
</reference>
<feature type="chain" id="PRO_0000281024" description="Rab effector MyRIP">
    <location>
        <begin position="1"/>
        <end position="856"/>
    </location>
</feature>
<feature type="domain" description="RabBD" evidence="3">
    <location>
        <begin position="4"/>
        <end position="124"/>
    </location>
</feature>
<feature type="zinc finger region" description="FYVE-type">
    <location>
        <begin position="63"/>
        <end position="105"/>
    </location>
</feature>
<feature type="region of interest" description="Myosin-binding" evidence="1">
    <location>
        <begin position="143"/>
        <end position="560"/>
    </location>
</feature>
<feature type="region of interest" description="PKA-binding" evidence="1">
    <location>
        <begin position="193"/>
        <end position="209"/>
    </location>
</feature>
<feature type="region of interest" description="Negative regulation of PKA-binding" evidence="1">
    <location>
        <begin position="232"/>
        <end position="248"/>
    </location>
</feature>
<feature type="region of interest" description="Disordered" evidence="4">
    <location>
        <begin position="251"/>
        <end position="287"/>
    </location>
</feature>
<feature type="region of interest" description="Disordered" evidence="4">
    <location>
        <begin position="302"/>
        <end position="323"/>
    </location>
</feature>
<feature type="region of interest" description="Disordered" evidence="4">
    <location>
        <begin position="350"/>
        <end position="376"/>
    </location>
</feature>
<feature type="region of interest" description="Disordered" evidence="4">
    <location>
        <begin position="392"/>
        <end position="578"/>
    </location>
</feature>
<feature type="region of interest" description="Actin-binding" evidence="1">
    <location>
        <begin position="495"/>
        <end position="856"/>
    </location>
</feature>
<feature type="region of interest" description="Disordered" evidence="4">
    <location>
        <begin position="592"/>
        <end position="625"/>
    </location>
</feature>
<feature type="region of interest" description="Disordered" evidence="4">
    <location>
        <begin position="778"/>
        <end position="805"/>
    </location>
</feature>
<feature type="region of interest" description="Disordered" evidence="4">
    <location>
        <begin position="826"/>
        <end position="845"/>
    </location>
</feature>
<feature type="compositionally biased region" description="Polar residues" evidence="4">
    <location>
        <begin position="302"/>
        <end position="311"/>
    </location>
</feature>
<feature type="compositionally biased region" description="Acidic residues" evidence="4">
    <location>
        <begin position="395"/>
        <end position="405"/>
    </location>
</feature>
<feature type="compositionally biased region" description="Low complexity" evidence="4">
    <location>
        <begin position="427"/>
        <end position="437"/>
    </location>
</feature>
<feature type="compositionally biased region" description="Low complexity" evidence="4">
    <location>
        <begin position="450"/>
        <end position="460"/>
    </location>
</feature>
<feature type="compositionally biased region" description="Polar residues" evidence="4">
    <location>
        <begin position="551"/>
        <end position="574"/>
    </location>
</feature>
<feature type="compositionally biased region" description="Polar residues" evidence="4">
    <location>
        <begin position="613"/>
        <end position="625"/>
    </location>
</feature>
<feature type="compositionally biased region" description="Polar residues" evidence="4">
    <location>
        <begin position="784"/>
        <end position="793"/>
    </location>
</feature>
<feature type="compositionally biased region" description="Polar residues" evidence="4">
    <location>
        <begin position="826"/>
        <end position="843"/>
    </location>
</feature>
<feature type="modified residue" description="Phosphoserine" evidence="2">
    <location>
        <position position="299"/>
    </location>
</feature>
<feature type="modified residue" description="Phosphoserine" evidence="6">
    <location>
        <position position="351"/>
    </location>
</feature>
<gene>
    <name type="primary">Myrip</name>
    <name type="synonym">Slac2c</name>
</gene>
<evidence type="ECO:0000250" key="1"/>
<evidence type="ECO:0000250" key="2">
    <source>
        <dbReference type="UniProtKB" id="Q8K3I4"/>
    </source>
</evidence>
<evidence type="ECO:0000255" key="3">
    <source>
        <dbReference type="PROSITE-ProRule" id="PRU00234"/>
    </source>
</evidence>
<evidence type="ECO:0000256" key="4">
    <source>
        <dbReference type="SAM" id="MobiDB-lite"/>
    </source>
</evidence>
<evidence type="ECO:0000269" key="5">
    <source>
    </source>
</evidence>
<evidence type="ECO:0007744" key="6">
    <source>
    </source>
</evidence>